<sequence>MSQAQENEHAGPAVPQTRTARHRRIVDILNRQPVRSQSQLAKLLADDGLSVTQATLSRDLDELNAVKIRNNDGDLIYAVPSEGGFRTPRVPLGESAKEERMRRLSAELLISAEASANLVVLRTPPGAAQFLASAIDQAELHDILGTIAGDDTLLLISREPTGGQALADHLLRLAQNHH</sequence>
<reference key="1">
    <citation type="journal article" date="2001" name="Proc. Natl. Acad. Sci. U.S.A.">
        <title>Genome sequence of an industrial microorganism Streptomyces avermitilis: deducing the ability of producing secondary metabolites.</title>
        <authorList>
            <person name="Omura S."/>
            <person name="Ikeda H."/>
            <person name="Ishikawa J."/>
            <person name="Hanamoto A."/>
            <person name="Takahashi C."/>
            <person name="Shinose M."/>
            <person name="Takahashi Y."/>
            <person name="Horikawa H."/>
            <person name="Nakazawa H."/>
            <person name="Osonoe T."/>
            <person name="Kikuchi H."/>
            <person name="Shiba T."/>
            <person name="Sakaki Y."/>
            <person name="Hattori M."/>
        </authorList>
    </citation>
    <scope>NUCLEOTIDE SEQUENCE [LARGE SCALE GENOMIC DNA]</scope>
    <source>
        <strain>ATCC 31267 / DSM 46492 / JCM 5070 / NBRC 14893 / NCIMB 12804 / NRRL 8165 / MA-4680</strain>
    </source>
</reference>
<reference key="2">
    <citation type="journal article" date="2003" name="Nat. Biotechnol.">
        <title>Complete genome sequence and comparative analysis of the industrial microorganism Streptomyces avermitilis.</title>
        <authorList>
            <person name="Ikeda H."/>
            <person name="Ishikawa J."/>
            <person name="Hanamoto A."/>
            <person name="Shinose M."/>
            <person name="Kikuchi H."/>
            <person name="Shiba T."/>
            <person name="Sakaki Y."/>
            <person name="Hattori M."/>
            <person name="Omura S."/>
        </authorList>
    </citation>
    <scope>NUCLEOTIDE SEQUENCE [LARGE SCALE GENOMIC DNA]</scope>
    <source>
        <strain>ATCC 31267 / DSM 46492 / JCM 5070 / NBRC 14893 / NCIMB 12804 / NRRL 8165 / MA-4680</strain>
    </source>
</reference>
<accession>Q828A2</accession>
<proteinExistence type="inferred from homology"/>
<feature type="chain" id="PRO_0000205122" description="Arginine repressor">
    <location>
        <begin position="1"/>
        <end position="178"/>
    </location>
</feature>
<feature type="region of interest" description="Disordered" evidence="2">
    <location>
        <begin position="1"/>
        <end position="21"/>
    </location>
</feature>
<keyword id="KW-0028">Amino-acid biosynthesis</keyword>
<keyword id="KW-0055">Arginine biosynthesis</keyword>
<keyword id="KW-0963">Cytoplasm</keyword>
<keyword id="KW-0238">DNA-binding</keyword>
<keyword id="KW-1185">Reference proteome</keyword>
<keyword id="KW-0678">Repressor</keyword>
<keyword id="KW-0804">Transcription</keyword>
<keyword id="KW-0805">Transcription regulation</keyword>
<dbReference type="EMBL" id="BA000030">
    <property type="protein sequence ID" value="BAC74478.1"/>
    <property type="molecule type" value="Genomic_DNA"/>
</dbReference>
<dbReference type="RefSeq" id="WP_010988166.1">
    <property type="nucleotide sequence ID" value="NZ_JZJK01000082.1"/>
</dbReference>
<dbReference type="SMR" id="Q828A2"/>
<dbReference type="GeneID" id="41543835"/>
<dbReference type="KEGG" id="sma:SAVERM_6767"/>
<dbReference type="eggNOG" id="COG1438">
    <property type="taxonomic scope" value="Bacteria"/>
</dbReference>
<dbReference type="HOGENOM" id="CLU_097103_1_1_11"/>
<dbReference type="OrthoDB" id="7060358at2"/>
<dbReference type="UniPathway" id="UPA00068"/>
<dbReference type="Proteomes" id="UP000000428">
    <property type="component" value="Chromosome"/>
</dbReference>
<dbReference type="GO" id="GO:0005737">
    <property type="term" value="C:cytoplasm"/>
    <property type="evidence" value="ECO:0007669"/>
    <property type="project" value="UniProtKB-SubCell"/>
</dbReference>
<dbReference type="GO" id="GO:0034618">
    <property type="term" value="F:arginine binding"/>
    <property type="evidence" value="ECO:0007669"/>
    <property type="project" value="InterPro"/>
</dbReference>
<dbReference type="GO" id="GO:0003677">
    <property type="term" value="F:DNA binding"/>
    <property type="evidence" value="ECO:0007669"/>
    <property type="project" value="UniProtKB-KW"/>
</dbReference>
<dbReference type="GO" id="GO:0003700">
    <property type="term" value="F:DNA-binding transcription factor activity"/>
    <property type="evidence" value="ECO:0007669"/>
    <property type="project" value="UniProtKB-UniRule"/>
</dbReference>
<dbReference type="GO" id="GO:0006526">
    <property type="term" value="P:L-arginine biosynthetic process"/>
    <property type="evidence" value="ECO:0007669"/>
    <property type="project" value="UniProtKB-UniPathway"/>
</dbReference>
<dbReference type="GO" id="GO:0051259">
    <property type="term" value="P:protein complex oligomerization"/>
    <property type="evidence" value="ECO:0007669"/>
    <property type="project" value="InterPro"/>
</dbReference>
<dbReference type="GO" id="GO:1900079">
    <property type="term" value="P:regulation of arginine biosynthetic process"/>
    <property type="evidence" value="ECO:0007669"/>
    <property type="project" value="UniProtKB-UniRule"/>
</dbReference>
<dbReference type="Gene3D" id="3.30.1360.40">
    <property type="match status" value="1"/>
</dbReference>
<dbReference type="Gene3D" id="1.10.10.10">
    <property type="entry name" value="Winged helix-like DNA-binding domain superfamily/Winged helix DNA-binding domain"/>
    <property type="match status" value="1"/>
</dbReference>
<dbReference type="HAMAP" id="MF_00173">
    <property type="entry name" value="Arg_repressor"/>
    <property type="match status" value="1"/>
</dbReference>
<dbReference type="InterPro" id="IPR001669">
    <property type="entry name" value="Arg_repress"/>
</dbReference>
<dbReference type="InterPro" id="IPR020899">
    <property type="entry name" value="Arg_repress_C"/>
</dbReference>
<dbReference type="InterPro" id="IPR036251">
    <property type="entry name" value="Arg_repress_C_sf"/>
</dbReference>
<dbReference type="InterPro" id="IPR020900">
    <property type="entry name" value="Arg_repress_DNA-bd"/>
</dbReference>
<dbReference type="InterPro" id="IPR036388">
    <property type="entry name" value="WH-like_DNA-bd_sf"/>
</dbReference>
<dbReference type="InterPro" id="IPR036390">
    <property type="entry name" value="WH_DNA-bd_sf"/>
</dbReference>
<dbReference type="NCBIfam" id="TIGR01529">
    <property type="entry name" value="argR_whole"/>
    <property type="match status" value="1"/>
</dbReference>
<dbReference type="NCBIfam" id="NF002880">
    <property type="entry name" value="PRK03341.1"/>
    <property type="match status" value="1"/>
</dbReference>
<dbReference type="PANTHER" id="PTHR34471">
    <property type="entry name" value="ARGININE REPRESSOR"/>
    <property type="match status" value="1"/>
</dbReference>
<dbReference type="PANTHER" id="PTHR34471:SF1">
    <property type="entry name" value="ARGININE REPRESSOR"/>
    <property type="match status" value="1"/>
</dbReference>
<dbReference type="Pfam" id="PF01316">
    <property type="entry name" value="Arg_repressor"/>
    <property type="match status" value="1"/>
</dbReference>
<dbReference type="Pfam" id="PF02863">
    <property type="entry name" value="Arg_repressor_C"/>
    <property type="match status" value="1"/>
</dbReference>
<dbReference type="PRINTS" id="PR01467">
    <property type="entry name" value="ARGREPRESSOR"/>
</dbReference>
<dbReference type="SUPFAM" id="SSF55252">
    <property type="entry name" value="C-terminal domain of arginine repressor"/>
    <property type="match status" value="1"/>
</dbReference>
<dbReference type="SUPFAM" id="SSF46785">
    <property type="entry name" value="Winged helix' DNA-binding domain"/>
    <property type="match status" value="1"/>
</dbReference>
<protein>
    <recommendedName>
        <fullName evidence="1">Arginine repressor</fullName>
    </recommendedName>
</protein>
<gene>
    <name evidence="1" type="primary">argR</name>
    <name type="ordered locus">SAV_6767</name>
</gene>
<comment type="function">
    <text evidence="1">Regulates arginine biosynthesis genes.</text>
</comment>
<comment type="pathway">
    <text>Amino-acid biosynthesis; L-arginine biosynthesis [regulation].</text>
</comment>
<comment type="subcellular location">
    <subcellularLocation>
        <location evidence="1">Cytoplasm</location>
    </subcellularLocation>
</comment>
<comment type="similarity">
    <text evidence="1">Belongs to the ArgR family.</text>
</comment>
<organism>
    <name type="scientific">Streptomyces avermitilis (strain ATCC 31267 / DSM 46492 / JCM 5070 / NBRC 14893 / NCIMB 12804 / NRRL 8165 / MA-4680)</name>
    <dbReference type="NCBI Taxonomy" id="227882"/>
    <lineage>
        <taxon>Bacteria</taxon>
        <taxon>Bacillati</taxon>
        <taxon>Actinomycetota</taxon>
        <taxon>Actinomycetes</taxon>
        <taxon>Kitasatosporales</taxon>
        <taxon>Streptomycetaceae</taxon>
        <taxon>Streptomyces</taxon>
    </lineage>
</organism>
<evidence type="ECO:0000255" key="1">
    <source>
        <dbReference type="HAMAP-Rule" id="MF_00173"/>
    </source>
</evidence>
<evidence type="ECO:0000256" key="2">
    <source>
        <dbReference type="SAM" id="MobiDB-lite"/>
    </source>
</evidence>
<name>ARGR_STRAW</name>